<proteinExistence type="inferred from homology"/>
<dbReference type="EC" id="3.4.23.43" evidence="1"/>
<dbReference type="EC" id="2.1.1.-" evidence="1"/>
<dbReference type="EMBL" id="U20255">
    <property type="protein sequence ID" value="AAC43998.1"/>
    <property type="molecule type" value="Genomic_DNA"/>
</dbReference>
<dbReference type="PIR" id="S70875">
    <property type="entry name" value="S70875"/>
</dbReference>
<dbReference type="MEROPS" id="A24.001"/>
<dbReference type="GO" id="GO:0005886">
    <property type="term" value="C:plasma membrane"/>
    <property type="evidence" value="ECO:0007669"/>
    <property type="project" value="UniProtKB-SubCell"/>
</dbReference>
<dbReference type="GO" id="GO:0004190">
    <property type="term" value="F:aspartic-type endopeptidase activity"/>
    <property type="evidence" value="ECO:0007669"/>
    <property type="project" value="UniProtKB-EC"/>
</dbReference>
<dbReference type="GO" id="GO:0046872">
    <property type="term" value="F:metal ion binding"/>
    <property type="evidence" value="ECO:0007669"/>
    <property type="project" value="UniProtKB-KW"/>
</dbReference>
<dbReference type="GO" id="GO:0008168">
    <property type="term" value="F:methyltransferase activity"/>
    <property type="evidence" value="ECO:0007669"/>
    <property type="project" value="UniProtKB-KW"/>
</dbReference>
<dbReference type="GO" id="GO:0032259">
    <property type="term" value="P:methylation"/>
    <property type="evidence" value="ECO:0007669"/>
    <property type="project" value="UniProtKB-KW"/>
</dbReference>
<dbReference type="GO" id="GO:0006465">
    <property type="term" value="P:signal peptide processing"/>
    <property type="evidence" value="ECO:0007669"/>
    <property type="project" value="TreeGrafter"/>
</dbReference>
<dbReference type="FunFam" id="1.20.120.1220:FF:000001">
    <property type="entry name" value="Type 4 prepilin-like proteins leader peptide-processing enzyme"/>
    <property type="match status" value="1"/>
</dbReference>
<dbReference type="Gene3D" id="1.20.120.1220">
    <property type="match status" value="1"/>
</dbReference>
<dbReference type="InterPro" id="IPR014032">
    <property type="entry name" value="Peptidase_A24A_bac"/>
</dbReference>
<dbReference type="InterPro" id="IPR000045">
    <property type="entry name" value="Prepilin_IV_endopep_pep"/>
</dbReference>
<dbReference type="InterPro" id="IPR010627">
    <property type="entry name" value="Prepilin_pept_A24_N"/>
</dbReference>
<dbReference type="InterPro" id="IPR050882">
    <property type="entry name" value="Prepilin_peptidase/N-MTase"/>
</dbReference>
<dbReference type="PANTHER" id="PTHR30487:SF0">
    <property type="entry name" value="PREPILIN LEADER PEPTIDASE_N-METHYLTRANSFERASE-RELATED"/>
    <property type="match status" value="1"/>
</dbReference>
<dbReference type="PANTHER" id="PTHR30487">
    <property type="entry name" value="TYPE 4 PREPILIN-LIKE PROTEINS LEADER PEPTIDE-PROCESSING ENZYME"/>
    <property type="match status" value="1"/>
</dbReference>
<dbReference type="Pfam" id="PF06750">
    <property type="entry name" value="A24_N_bact"/>
    <property type="match status" value="1"/>
</dbReference>
<dbReference type="Pfam" id="PF01478">
    <property type="entry name" value="Peptidase_A24"/>
    <property type="match status" value="1"/>
</dbReference>
<dbReference type="PRINTS" id="PR00864">
    <property type="entry name" value="PREPILNPTASE"/>
</dbReference>
<feature type="chain" id="PRO_0000192614" description="Prepilin leader peptidase/N-methyltransferase">
    <location>
        <begin position="1"/>
        <end position="290"/>
    </location>
</feature>
<feature type="transmembrane region" description="Helical" evidence="2">
    <location>
        <begin position="14"/>
        <end position="34"/>
    </location>
</feature>
<feature type="transmembrane region" description="Helical" evidence="2">
    <location>
        <begin position="106"/>
        <end position="126"/>
    </location>
</feature>
<feature type="transmembrane region" description="Helical" evidence="2">
    <location>
        <begin position="130"/>
        <end position="150"/>
    </location>
</feature>
<feature type="transmembrane region" description="Helical" evidence="2">
    <location>
        <begin position="161"/>
        <end position="181"/>
    </location>
</feature>
<feature type="transmembrane region" description="Helical" evidence="2">
    <location>
        <begin position="185"/>
        <end position="205"/>
    </location>
</feature>
<feature type="transmembrane region" description="Helical" evidence="2">
    <location>
        <begin position="232"/>
        <end position="252"/>
    </location>
</feature>
<feature type="transmembrane region" description="Helical" evidence="2">
    <location>
        <begin position="261"/>
        <end position="281"/>
    </location>
</feature>
<feature type="binding site" evidence="1">
    <location>
        <position position="74"/>
    </location>
    <ligand>
        <name>Zn(2+)</name>
        <dbReference type="ChEBI" id="CHEBI:29105"/>
    </ligand>
</feature>
<feature type="binding site" evidence="1">
    <location>
        <position position="77"/>
    </location>
    <ligand>
        <name>Zn(2+)</name>
        <dbReference type="ChEBI" id="CHEBI:29105"/>
    </ligand>
</feature>
<feature type="binding site" evidence="1">
    <location>
        <position position="99"/>
    </location>
    <ligand>
        <name>Zn(2+)</name>
        <dbReference type="ChEBI" id="CHEBI:29105"/>
    </ligand>
</feature>
<feature type="binding site" evidence="1">
    <location>
        <position position="102"/>
    </location>
    <ligand>
        <name>Zn(2+)</name>
        <dbReference type="ChEBI" id="CHEBI:29105"/>
    </ligand>
</feature>
<comment type="function">
    <text evidence="1">Plays an essential role in type IV pili and type II pseudopili formation by proteolytically removing the leader sequence from substrate proteins and subsequently monomethylating the alpha-amino group of the newly exposed N-terminal phenylalanine.</text>
</comment>
<comment type="catalytic activity">
    <reaction evidence="1">
        <text>Typically cleaves a -Gly-|-Phe- bond to release an N-terminal, basic peptide of 5-8 residues from type IV prepilin, and then N-methylates the new N-terminal amino group, the methyl donor being S-adenosyl-L-methionine.</text>
        <dbReference type="EC" id="3.4.23.43"/>
    </reaction>
</comment>
<comment type="cofactor">
    <cofactor evidence="1">
        <name>Zn(2+)</name>
        <dbReference type="ChEBI" id="CHEBI:29105"/>
    </cofactor>
    <text evidence="1">Zinc is required for the N-terminal methylation of the mature pilin, but not for signal peptide cleavage.</text>
</comment>
<comment type="subcellular location">
    <subcellularLocation>
        <location evidence="1">Cell inner membrane</location>
        <topology evidence="1">Multi-pass membrane protein</topology>
    </subcellularLocation>
</comment>
<comment type="similarity">
    <text evidence="3">Belongs to the peptidase A24 family.</text>
</comment>
<reference key="1">
    <citation type="journal article" date="1996" name="Mol. Microbiol.">
        <title>Cloning of an Aeromonas hydrophila type IV pilus biogenesis gene cluster: complementation of pilus assembly functions and characterization of a type IV leader peptidase/N-methyltransferase required for extracellular protein secretion.</title>
        <authorList>
            <person name="Pepe C.M."/>
            <person name="Eklund M.W."/>
            <person name="Strom M.S."/>
        </authorList>
    </citation>
    <scope>NUCLEOTIDE SEQUENCE [GENOMIC DNA]</scope>
    <source>
        <strain>Ah65</strain>
    </source>
</reference>
<protein>
    <recommendedName>
        <fullName>Prepilin leader peptidase/N-methyltransferase</fullName>
    </recommendedName>
    <domain>
        <recommendedName>
            <fullName>Leader peptidase</fullName>
            <ecNumber evidence="1">3.4.23.43</ecNumber>
        </recommendedName>
        <alternativeName>
            <fullName>Prepilin peptidase</fullName>
        </alternativeName>
    </domain>
    <domain>
        <recommendedName>
            <fullName>N-methyltransferase</fullName>
            <ecNumber evidence="1">2.1.1.-</ecNumber>
        </recommendedName>
    </domain>
</protein>
<keyword id="KW-0997">Cell inner membrane</keyword>
<keyword id="KW-1003">Cell membrane</keyword>
<keyword id="KW-0378">Hydrolase</keyword>
<keyword id="KW-0472">Membrane</keyword>
<keyword id="KW-0479">Metal-binding</keyword>
<keyword id="KW-0489">Methyltransferase</keyword>
<keyword id="KW-0511">Multifunctional enzyme</keyword>
<keyword id="KW-0645">Protease</keyword>
<keyword id="KW-0949">S-adenosyl-L-methionine</keyword>
<keyword id="KW-0808">Transferase</keyword>
<keyword id="KW-0812">Transmembrane</keyword>
<keyword id="KW-1133">Transmembrane helix</keyword>
<keyword id="KW-0862">Zinc</keyword>
<sequence length="290" mass="32309">MALLLELAHGLPWLYFSLVFLFSLMIGSFLNVVIHRLPIMLEREWQAEYRSYFNPDDEGVDEPPYNLMVPRSCCPHCNHPITALENIPLLSWLWLRGRCRGCQAPISARYPLVELLTALLSVAVAMTLAPGWGTLAALLLTWVLVALTFIDLDKMLLPDQLTLPLLWGGLLFNLLGGFVSLGDAVIGAMAGYLVLWSLYWAFKLLTGKEGMGYGDFKLLAALGAWLGWQALPIVLLLSSLVGAFMGIGLILLRNHHQSKPIPFGPYLAIAGWIALLWGDSITRWYLTNFL</sequence>
<evidence type="ECO:0000250" key="1">
    <source>
        <dbReference type="UniProtKB" id="P22610"/>
    </source>
</evidence>
<evidence type="ECO:0000255" key="2"/>
<evidence type="ECO:0000305" key="3"/>
<accession>P45794</accession>
<organism>
    <name type="scientific">Aeromonas hydrophila</name>
    <dbReference type="NCBI Taxonomy" id="644"/>
    <lineage>
        <taxon>Bacteria</taxon>
        <taxon>Pseudomonadati</taxon>
        <taxon>Pseudomonadota</taxon>
        <taxon>Gammaproteobacteria</taxon>
        <taxon>Aeromonadales</taxon>
        <taxon>Aeromonadaceae</taxon>
        <taxon>Aeromonas</taxon>
    </lineage>
</organism>
<gene>
    <name type="primary">tapD</name>
</gene>
<name>LEP4_AERHY</name>